<protein>
    <recommendedName>
        <fullName evidence="10">G-type lectin S-receptor-like serine/threonine-protein kinase LECRK4</fullName>
        <shortName evidence="9">OsLecRK4</shortName>
        <ecNumber evidence="10">2.7.11.1</ecNumber>
    </recommendedName>
    <alternativeName>
        <fullName evidence="8">OsRLCK136</fullName>
    </alternativeName>
</protein>
<gene>
    <name evidence="9" type="primary">LECRK4</name>
    <name evidence="11" type="ordered locus">Os04g0202800</name>
    <name evidence="10" type="ordered locus">LOC_Os04g12600</name>
    <name evidence="13" type="ORF">OsJ_13808</name>
    <name evidence="12" type="ORF">OSJNBb0005B05.8</name>
</gene>
<organism>
    <name type="scientific">Oryza sativa subsp. japonica</name>
    <name type="common">Rice</name>
    <dbReference type="NCBI Taxonomy" id="39947"/>
    <lineage>
        <taxon>Eukaryota</taxon>
        <taxon>Viridiplantae</taxon>
        <taxon>Streptophyta</taxon>
        <taxon>Embryophyta</taxon>
        <taxon>Tracheophyta</taxon>
        <taxon>Spermatophyta</taxon>
        <taxon>Magnoliopsida</taxon>
        <taxon>Liliopsida</taxon>
        <taxon>Poales</taxon>
        <taxon>Poaceae</taxon>
        <taxon>BOP clade</taxon>
        <taxon>Oryzoideae</taxon>
        <taxon>Oryzeae</taxon>
        <taxon>Oryzinae</taxon>
        <taxon>Oryza</taxon>
        <taxon>Oryza sativa</taxon>
    </lineage>
</organism>
<comment type="function">
    <text evidence="7">Does not seem to be involved in resistance against the herbivorous insect brown planthopper (N.lugens, BPH).</text>
</comment>
<comment type="catalytic activity">
    <reaction evidence="10">
        <text>L-seryl-[protein] + ATP = O-phospho-L-seryl-[protein] + ADP + H(+)</text>
        <dbReference type="Rhea" id="RHEA:17989"/>
        <dbReference type="Rhea" id="RHEA-COMP:9863"/>
        <dbReference type="Rhea" id="RHEA-COMP:11604"/>
        <dbReference type="ChEBI" id="CHEBI:15378"/>
        <dbReference type="ChEBI" id="CHEBI:29999"/>
        <dbReference type="ChEBI" id="CHEBI:30616"/>
        <dbReference type="ChEBI" id="CHEBI:83421"/>
        <dbReference type="ChEBI" id="CHEBI:456216"/>
        <dbReference type="EC" id="2.7.11.1"/>
    </reaction>
</comment>
<comment type="catalytic activity">
    <reaction evidence="10">
        <text>L-threonyl-[protein] + ATP = O-phospho-L-threonyl-[protein] + ADP + H(+)</text>
        <dbReference type="Rhea" id="RHEA:46608"/>
        <dbReference type="Rhea" id="RHEA-COMP:11060"/>
        <dbReference type="Rhea" id="RHEA-COMP:11605"/>
        <dbReference type="ChEBI" id="CHEBI:15378"/>
        <dbReference type="ChEBI" id="CHEBI:30013"/>
        <dbReference type="ChEBI" id="CHEBI:30616"/>
        <dbReference type="ChEBI" id="CHEBI:61977"/>
        <dbReference type="ChEBI" id="CHEBI:456216"/>
        <dbReference type="EC" id="2.7.11.1"/>
    </reaction>
</comment>
<comment type="subcellular location">
    <subcellularLocation>
        <location evidence="1">Membrane</location>
        <topology evidence="1">Single-pass type I membrane protein</topology>
    </subcellularLocation>
</comment>
<comment type="similarity">
    <text evidence="4">Belongs to the protein kinase superfamily. Ser/Thr protein kinase family.</text>
</comment>
<comment type="sequence caution" evidence="10">
    <conflict type="erroneous initiation">
        <sequence resource="EMBL-CDS" id="BAS88076"/>
    </conflict>
    <text>Extended N-terminus.</text>
</comment>
<feature type="signal peptide" evidence="1">
    <location>
        <begin position="1"/>
        <end position="23"/>
    </location>
</feature>
<feature type="chain" id="PRO_0000436171" description="G-type lectin S-receptor-like serine/threonine-protein kinase LECRK4" evidence="1">
    <location>
        <begin position="24"/>
        <end position="804"/>
    </location>
</feature>
<feature type="topological domain" description="Extracellular" evidence="10">
    <location>
        <begin position="24"/>
        <end position="458"/>
    </location>
</feature>
<feature type="transmembrane region" description="Helical" evidence="1">
    <location>
        <begin position="459"/>
        <end position="479"/>
    </location>
</feature>
<feature type="topological domain" description="Cytoplasmic" evidence="10">
    <location>
        <begin position="480"/>
        <end position="804"/>
    </location>
</feature>
<feature type="domain" description="Bulb-type lectin" evidence="2">
    <location>
        <begin position="24"/>
        <end position="150"/>
    </location>
</feature>
<feature type="domain" description="EGF-like; atypical" evidence="10">
    <location>
        <begin position="290"/>
        <end position="341"/>
    </location>
</feature>
<feature type="domain" description="PAN" evidence="5">
    <location>
        <begin position="349"/>
        <end position="426"/>
    </location>
</feature>
<feature type="domain" description="Protein kinase" evidence="4">
    <location>
        <begin position="514"/>
        <end position="790"/>
    </location>
</feature>
<feature type="active site" description="Proton acceptor" evidence="4">
    <location>
        <position position="638"/>
    </location>
</feature>
<feature type="binding site" evidence="4">
    <location>
        <begin position="520"/>
        <end position="528"/>
    </location>
    <ligand>
        <name>ATP</name>
        <dbReference type="ChEBI" id="CHEBI:30616"/>
    </ligand>
</feature>
<feature type="binding site" evidence="4">
    <location>
        <position position="544"/>
    </location>
    <ligand>
        <name>ATP</name>
        <dbReference type="ChEBI" id="CHEBI:30616"/>
    </ligand>
</feature>
<feature type="glycosylation site" description="N-linked (GlcNAc...) asparagine" evidence="6">
    <location>
        <position position="25"/>
    </location>
</feature>
<feature type="glycosylation site" description="N-linked (GlcNAc...) asparagine" evidence="6">
    <location>
        <position position="58"/>
    </location>
</feature>
<feature type="glycosylation site" description="N-linked (GlcNAc...) asparagine" evidence="6">
    <location>
        <position position="216"/>
    </location>
</feature>
<feature type="glycosylation site" description="N-linked (GlcNAc...) asparagine" evidence="6">
    <location>
        <position position="227"/>
    </location>
</feature>
<feature type="glycosylation site" description="N-linked (GlcNAc...) asparagine" evidence="6">
    <location>
        <position position="238"/>
    </location>
</feature>
<feature type="glycosylation site" description="N-linked (GlcNAc...) asparagine" evidence="6">
    <location>
        <position position="243"/>
    </location>
</feature>
<feature type="glycosylation site" description="N-linked (GlcNAc...) asparagine" evidence="6">
    <location>
        <position position="318"/>
    </location>
</feature>
<feature type="glycosylation site" description="N-linked (GlcNAc...) asparagine" evidence="6">
    <location>
        <position position="434"/>
    </location>
</feature>
<feature type="disulfide bond" evidence="3">
    <location>
        <begin position="294"/>
        <end position="311"/>
    </location>
</feature>
<feature type="disulfide bond" evidence="3">
    <location>
        <begin position="305"/>
        <end position="322"/>
    </location>
</feature>
<feature type="disulfide bond" evidence="3">
    <location>
        <begin position="324"/>
        <end position="340"/>
    </location>
</feature>
<feature type="disulfide bond" evidence="5">
    <location>
        <begin position="386"/>
        <end position="406"/>
    </location>
</feature>
<feature type="disulfide bond" evidence="5">
    <location>
        <begin position="390"/>
        <end position="396"/>
    </location>
</feature>
<dbReference type="EC" id="2.7.11.1" evidence="10"/>
<dbReference type="EMBL" id="AL606606">
    <property type="protein sequence ID" value="CAE03341.2"/>
    <property type="molecule type" value="Genomic_DNA"/>
</dbReference>
<dbReference type="EMBL" id="AP008210">
    <property type="protein sequence ID" value="BAF14142.2"/>
    <property type="molecule type" value="Genomic_DNA"/>
</dbReference>
<dbReference type="EMBL" id="AP014960">
    <property type="protein sequence ID" value="BAS88076.1"/>
    <property type="status" value="ALT_INIT"/>
    <property type="molecule type" value="Genomic_DNA"/>
</dbReference>
<dbReference type="EMBL" id="CM000141">
    <property type="protein sequence ID" value="EAZ29749.1"/>
    <property type="molecule type" value="Genomic_DNA"/>
</dbReference>
<dbReference type="RefSeq" id="XP_015634539.1">
    <property type="nucleotide sequence ID" value="XM_015779053.1"/>
</dbReference>
<dbReference type="SMR" id="Q7FAZ0"/>
<dbReference type="FunCoup" id="Q7FAZ0">
    <property type="interactions" value="1894"/>
</dbReference>
<dbReference type="STRING" id="39947.Q7FAZ0"/>
<dbReference type="GlyCosmos" id="Q7FAZ0">
    <property type="glycosylation" value="8 sites, No reported glycans"/>
</dbReference>
<dbReference type="PaxDb" id="39947-Q7FAZ0"/>
<dbReference type="EnsemblPlants" id="Os04t0202800-01">
    <property type="protein sequence ID" value="Os04t0202800-01"/>
    <property type="gene ID" value="Os04g0202800"/>
</dbReference>
<dbReference type="Gramene" id="Os04t0202800-01">
    <property type="protein sequence ID" value="Os04t0202800-01"/>
    <property type="gene ID" value="Os04g0202800"/>
</dbReference>
<dbReference type="KEGG" id="dosa:Os04g0202800"/>
<dbReference type="eggNOG" id="ENOG502QQEW">
    <property type="taxonomic scope" value="Eukaryota"/>
</dbReference>
<dbReference type="HOGENOM" id="CLU_000288_116_2_1"/>
<dbReference type="InParanoid" id="Q7FAZ0"/>
<dbReference type="OrthoDB" id="1930390at2759"/>
<dbReference type="Proteomes" id="UP000000763">
    <property type="component" value="Chromosome 4"/>
</dbReference>
<dbReference type="Proteomes" id="UP000007752">
    <property type="component" value="Chromosome 4"/>
</dbReference>
<dbReference type="Proteomes" id="UP000059680">
    <property type="component" value="Chromosome 4"/>
</dbReference>
<dbReference type="GO" id="GO:0016020">
    <property type="term" value="C:membrane"/>
    <property type="evidence" value="ECO:0007669"/>
    <property type="project" value="UniProtKB-SubCell"/>
</dbReference>
<dbReference type="GO" id="GO:0005524">
    <property type="term" value="F:ATP binding"/>
    <property type="evidence" value="ECO:0007669"/>
    <property type="project" value="UniProtKB-KW"/>
</dbReference>
<dbReference type="GO" id="GO:0030246">
    <property type="term" value="F:carbohydrate binding"/>
    <property type="evidence" value="ECO:0007669"/>
    <property type="project" value="UniProtKB-KW"/>
</dbReference>
<dbReference type="GO" id="GO:0004672">
    <property type="term" value="F:protein kinase activity"/>
    <property type="evidence" value="ECO:0000318"/>
    <property type="project" value="GO_Central"/>
</dbReference>
<dbReference type="GO" id="GO:0106310">
    <property type="term" value="F:protein serine kinase activity"/>
    <property type="evidence" value="ECO:0007669"/>
    <property type="project" value="RHEA"/>
</dbReference>
<dbReference type="GO" id="GO:0004674">
    <property type="term" value="F:protein serine/threonine kinase activity"/>
    <property type="evidence" value="ECO:0007669"/>
    <property type="project" value="UniProtKB-KW"/>
</dbReference>
<dbReference type="GO" id="GO:0051707">
    <property type="term" value="P:response to other organism"/>
    <property type="evidence" value="ECO:0007669"/>
    <property type="project" value="UniProtKB-ARBA"/>
</dbReference>
<dbReference type="CDD" id="cd01098">
    <property type="entry name" value="PAN_AP_plant"/>
    <property type="match status" value="1"/>
</dbReference>
<dbReference type="FunFam" id="1.10.510.10:FF:000237">
    <property type="entry name" value="G-type lectin S-receptor-like serine/threonine-protein kinase"/>
    <property type="match status" value="1"/>
</dbReference>
<dbReference type="FunFam" id="3.30.200.20:FF:000059">
    <property type="entry name" value="S-receptor-like serine/threonine-protein kinase"/>
    <property type="match status" value="1"/>
</dbReference>
<dbReference type="FunFam" id="2.90.10.10:FF:000008">
    <property type="entry name" value="Serine/threonine-protein kinase"/>
    <property type="match status" value="1"/>
</dbReference>
<dbReference type="Gene3D" id="2.90.10.10">
    <property type="entry name" value="Bulb-type lectin domain"/>
    <property type="match status" value="2"/>
</dbReference>
<dbReference type="Gene3D" id="3.30.200.20">
    <property type="entry name" value="Phosphorylase Kinase, domain 1"/>
    <property type="match status" value="1"/>
</dbReference>
<dbReference type="Gene3D" id="1.10.510.10">
    <property type="entry name" value="Transferase(Phosphotransferase) domain 1"/>
    <property type="match status" value="1"/>
</dbReference>
<dbReference type="InterPro" id="IPR001480">
    <property type="entry name" value="Bulb-type_lectin_dom"/>
</dbReference>
<dbReference type="InterPro" id="IPR036426">
    <property type="entry name" value="Bulb-type_lectin_dom_sf"/>
</dbReference>
<dbReference type="InterPro" id="IPR051343">
    <property type="entry name" value="G-type_lectin_kinases/EP1-like"/>
</dbReference>
<dbReference type="InterPro" id="IPR011009">
    <property type="entry name" value="Kinase-like_dom_sf"/>
</dbReference>
<dbReference type="InterPro" id="IPR000719">
    <property type="entry name" value="Prot_kinase_dom"/>
</dbReference>
<dbReference type="InterPro" id="IPR017441">
    <property type="entry name" value="Protein_kinase_ATP_BS"/>
</dbReference>
<dbReference type="InterPro" id="IPR008271">
    <property type="entry name" value="Ser/Thr_kinase_AS"/>
</dbReference>
<dbReference type="InterPro" id="IPR024171">
    <property type="entry name" value="SRK-like_kinase"/>
</dbReference>
<dbReference type="PANTHER" id="PTHR47976">
    <property type="entry name" value="G-TYPE LECTIN S-RECEPTOR-LIKE SERINE/THREONINE-PROTEIN KINASE SD2-5"/>
    <property type="match status" value="1"/>
</dbReference>
<dbReference type="PANTHER" id="PTHR47976:SF89">
    <property type="entry name" value="G-TYPE LECTIN S-RECEPTOR-LIKE SERINE_THREONINE-PROTEIN KINASE LECRK3"/>
    <property type="match status" value="1"/>
</dbReference>
<dbReference type="Pfam" id="PF01453">
    <property type="entry name" value="B_lectin"/>
    <property type="match status" value="1"/>
</dbReference>
<dbReference type="Pfam" id="PF00069">
    <property type="entry name" value="Pkinase"/>
    <property type="match status" value="1"/>
</dbReference>
<dbReference type="PIRSF" id="PIRSF000641">
    <property type="entry name" value="SRK"/>
    <property type="match status" value="1"/>
</dbReference>
<dbReference type="SMART" id="SM00108">
    <property type="entry name" value="B_lectin"/>
    <property type="match status" value="1"/>
</dbReference>
<dbReference type="SMART" id="SM00220">
    <property type="entry name" value="S_TKc"/>
    <property type="match status" value="1"/>
</dbReference>
<dbReference type="SUPFAM" id="SSF51110">
    <property type="entry name" value="alpha-D-mannose-specific plant lectins"/>
    <property type="match status" value="1"/>
</dbReference>
<dbReference type="SUPFAM" id="SSF56112">
    <property type="entry name" value="Protein kinase-like (PK-like)"/>
    <property type="match status" value="1"/>
</dbReference>
<dbReference type="PROSITE" id="PS50927">
    <property type="entry name" value="BULB_LECTIN"/>
    <property type="match status" value="1"/>
</dbReference>
<dbReference type="PROSITE" id="PS00107">
    <property type="entry name" value="PROTEIN_KINASE_ATP"/>
    <property type="match status" value="1"/>
</dbReference>
<dbReference type="PROSITE" id="PS50011">
    <property type="entry name" value="PROTEIN_KINASE_DOM"/>
    <property type="match status" value="1"/>
</dbReference>
<dbReference type="PROSITE" id="PS00108">
    <property type="entry name" value="PROTEIN_KINASE_ST"/>
    <property type="match status" value="1"/>
</dbReference>
<name>LERK4_ORYSJ</name>
<evidence type="ECO:0000255" key="1"/>
<evidence type="ECO:0000255" key="2">
    <source>
        <dbReference type="PROSITE-ProRule" id="PRU00038"/>
    </source>
</evidence>
<evidence type="ECO:0000255" key="3">
    <source>
        <dbReference type="PROSITE-ProRule" id="PRU00076"/>
    </source>
</evidence>
<evidence type="ECO:0000255" key="4">
    <source>
        <dbReference type="PROSITE-ProRule" id="PRU00159"/>
    </source>
</evidence>
<evidence type="ECO:0000255" key="5">
    <source>
        <dbReference type="PROSITE-ProRule" id="PRU00315"/>
    </source>
</evidence>
<evidence type="ECO:0000255" key="6">
    <source>
        <dbReference type="PROSITE-ProRule" id="PRU00498"/>
    </source>
</evidence>
<evidence type="ECO:0000269" key="7">
    <source>
    </source>
</evidence>
<evidence type="ECO:0000303" key="8">
    <source>
    </source>
</evidence>
<evidence type="ECO:0000303" key="9">
    <source>
    </source>
</evidence>
<evidence type="ECO:0000305" key="10"/>
<evidence type="ECO:0000312" key="11">
    <source>
        <dbReference type="EMBL" id="BAF14142.2"/>
    </source>
</evidence>
<evidence type="ECO:0000312" key="12">
    <source>
        <dbReference type="EMBL" id="CAE03341.2"/>
    </source>
</evidence>
<evidence type="ECO:0000312" key="13">
    <source>
        <dbReference type="EMBL" id="EAZ29749.1"/>
    </source>
</evidence>
<accession>Q7FAZ0</accession>
<accession>A0A0P0W7I0</accession>
<accession>Q0JEU5</accession>
<reference key="1">
    <citation type="journal article" date="2002" name="Nature">
        <title>Sequence and analysis of rice chromosome 4.</title>
        <authorList>
            <person name="Feng Q."/>
            <person name="Zhang Y."/>
            <person name="Hao P."/>
            <person name="Wang S."/>
            <person name="Fu G."/>
            <person name="Huang Y."/>
            <person name="Li Y."/>
            <person name="Zhu J."/>
            <person name="Liu Y."/>
            <person name="Hu X."/>
            <person name="Jia P."/>
            <person name="Zhang Y."/>
            <person name="Zhao Q."/>
            <person name="Ying K."/>
            <person name="Yu S."/>
            <person name="Tang Y."/>
            <person name="Weng Q."/>
            <person name="Zhang L."/>
            <person name="Lu Y."/>
            <person name="Mu J."/>
            <person name="Lu Y."/>
            <person name="Zhang L.S."/>
            <person name="Yu Z."/>
            <person name="Fan D."/>
            <person name="Liu X."/>
            <person name="Lu T."/>
            <person name="Li C."/>
            <person name="Wu Y."/>
            <person name="Sun T."/>
            <person name="Lei H."/>
            <person name="Li T."/>
            <person name="Hu H."/>
            <person name="Guan J."/>
            <person name="Wu M."/>
            <person name="Zhang R."/>
            <person name="Zhou B."/>
            <person name="Chen Z."/>
            <person name="Chen L."/>
            <person name="Jin Z."/>
            <person name="Wang R."/>
            <person name="Yin H."/>
            <person name="Cai Z."/>
            <person name="Ren S."/>
            <person name="Lv G."/>
            <person name="Gu W."/>
            <person name="Zhu G."/>
            <person name="Tu Y."/>
            <person name="Jia J."/>
            <person name="Zhang Y."/>
            <person name="Chen J."/>
            <person name="Kang H."/>
            <person name="Chen X."/>
            <person name="Shao C."/>
            <person name="Sun Y."/>
            <person name="Hu Q."/>
            <person name="Zhang X."/>
            <person name="Zhang W."/>
            <person name="Wang L."/>
            <person name="Ding C."/>
            <person name="Sheng H."/>
            <person name="Gu J."/>
            <person name="Chen S."/>
            <person name="Ni L."/>
            <person name="Zhu F."/>
            <person name="Chen W."/>
            <person name="Lan L."/>
            <person name="Lai Y."/>
            <person name="Cheng Z."/>
            <person name="Gu M."/>
            <person name="Jiang J."/>
            <person name="Li J."/>
            <person name="Hong G."/>
            <person name="Xue Y."/>
            <person name="Han B."/>
        </authorList>
    </citation>
    <scope>NUCLEOTIDE SEQUENCE [LARGE SCALE GENOMIC DNA]</scope>
    <source>
        <strain>cv. Nipponbare</strain>
    </source>
</reference>
<reference key="2">
    <citation type="journal article" date="2005" name="Nature">
        <title>The map-based sequence of the rice genome.</title>
        <authorList>
            <consortium name="International rice genome sequencing project (IRGSP)"/>
        </authorList>
    </citation>
    <scope>NUCLEOTIDE SEQUENCE [LARGE SCALE GENOMIC DNA]</scope>
    <source>
        <strain>cv. Nipponbare</strain>
    </source>
</reference>
<reference key="3">
    <citation type="journal article" date="2008" name="Nucleic Acids Res.">
        <title>The rice annotation project database (RAP-DB): 2008 update.</title>
        <authorList>
            <consortium name="The rice annotation project (RAP)"/>
        </authorList>
    </citation>
    <scope>GENOME REANNOTATION</scope>
    <source>
        <strain>cv. Nipponbare</strain>
    </source>
</reference>
<reference key="4">
    <citation type="journal article" date="2013" name="Rice">
        <title>Improvement of the Oryza sativa Nipponbare reference genome using next generation sequence and optical map data.</title>
        <authorList>
            <person name="Kawahara Y."/>
            <person name="de la Bastide M."/>
            <person name="Hamilton J.P."/>
            <person name="Kanamori H."/>
            <person name="McCombie W.R."/>
            <person name="Ouyang S."/>
            <person name="Schwartz D.C."/>
            <person name="Tanaka T."/>
            <person name="Wu J."/>
            <person name="Zhou S."/>
            <person name="Childs K.L."/>
            <person name="Davidson R.M."/>
            <person name="Lin H."/>
            <person name="Quesada-Ocampo L."/>
            <person name="Vaillancourt B."/>
            <person name="Sakai H."/>
            <person name="Lee S.S."/>
            <person name="Kim J."/>
            <person name="Numa H."/>
            <person name="Itoh T."/>
            <person name="Buell C.R."/>
            <person name="Matsumoto T."/>
        </authorList>
    </citation>
    <scope>GENOME REANNOTATION</scope>
    <source>
        <strain>cv. Nipponbare</strain>
    </source>
</reference>
<reference key="5">
    <citation type="journal article" date="2005" name="PLoS Biol.">
        <title>The genomes of Oryza sativa: a history of duplications.</title>
        <authorList>
            <person name="Yu J."/>
            <person name="Wang J."/>
            <person name="Lin W."/>
            <person name="Li S."/>
            <person name="Li H."/>
            <person name="Zhou J."/>
            <person name="Ni P."/>
            <person name="Dong W."/>
            <person name="Hu S."/>
            <person name="Zeng C."/>
            <person name="Zhang J."/>
            <person name="Zhang Y."/>
            <person name="Li R."/>
            <person name="Xu Z."/>
            <person name="Li S."/>
            <person name="Li X."/>
            <person name="Zheng H."/>
            <person name="Cong L."/>
            <person name="Lin L."/>
            <person name="Yin J."/>
            <person name="Geng J."/>
            <person name="Li G."/>
            <person name="Shi J."/>
            <person name="Liu J."/>
            <person name="Lv H."/>
            <person name="Li J."/>
            <person name="Wang J."/>
            <person name="Deng Y."/>
            <person name="Ran L."/>
            <person name="Shi X."/>
            <person name="Wang X."/>
            <person name="Wu Q."/>
            <person name="Li C."/>
            <person name="Ren X."/>
            <person name="Wang J."/>
            <person name="Wang X."/>
            <person name="Li D."/>
            <person name="Liu D."/>
            <person name="Zhang X."/>
            <person name="Ji Z."/>
            <person name="Zhao W."/>
            <person name="Sun Y."/>
            <person name="Zhang Z."/>
            <person name="Bao J."/>
            <person name="Han Y."/>
            <person name="Dong L."/>
            <person name="Ji J."/>
            <person name="Chen P."/>
            <person name="Wu S."/>
            <person name="Liu J."/>
            <person name="Xiao Y."/>
            <person name="Bu D."/>
            <person name="Tan J."/>
            <person name="Yang L."/>
            <person name="Ye C."/>
            <person name="Zhang J."/>
            <person name="Xu J."/>
            <person name="Zhou Y."/>
            <person name="Yu Y."/>
            <person name="Zhang B."/>
            <person name="Zhuang S."/>
            <person name="Wei H."/>
            <person name="Liu B."/>
            <person name="Lei M."/>
            <person name="Yu H."/>
            <person name="Li Y."/>
            <person name="Xu H."/>
            <person name="Wei S."/>
            <person name="He X."/>
            <person name="Fang L."/>
            <person name="Zhang Z."/>
            <person name="Zhang Y."/>
            <person name="Huang X."/>
            <person name="Su Z."/>
            <person name="Tong W."/>
            <person name="Li J."/>
            <person name="Tong Z."/>
            <person name="Li S."/>
            <person name="Ye J."/>
            <person name="Wang L."/>
            <person name="Fang L."/>
            <person name="Lei T."/>
            <person name="Chen C.-S."/>
            <person name="Chen H.-C."/>
            <person name="Xu Z."/>
            <person name="Li H."/>
            <person name="Huang H."/>
            <person name="Zhang F."/>
            <person name="Xu H."/>
            <person name="Li N."/>
            <person name="Zhao C."/>
            <person name="Li S."/>
            <person name="Dong L."/>
            <person name="Huang Y."/>
            <person name="Li L."/>
            <person name="Xi Y."/>
            <person name="Qi Q."/>
            <person name="Li W."/>
            <person name="Zhang B."/>
            <person name="Hu W."/>
            <person name="Zhang Y."/>
            <person name="Tian X."/>
            <person name="Jiao Y."/>
            <person name="Liang X."/>
            <person name="Jin J."/>
            <person name="Gao L."/>
            <person name="Zheng W."/>
            <person name="Hao B."/>
            <person name="Liu S.-M."/>
            <person name="Wang W."/>
            <person name="Yuan L."/>
            <person name="Cao M."/>
            <person name="McDermott J."/>
            <person name="Samudrala R."/>
            <person name="Wang J."/>
            <person name="Wong G.K.-S."/>
            <person name="Yang H."/>
        </authorList>
    </citation>
    <scope>NUCLEOTIDE SEQUENCE [LARGE SCALE GENOMIC DNA]</scope>
    <source>
        <strain>cv. Nipponbare</strain>
    </source>
</reference>
<reference key="6">
    <citation type="journal article" date="2008" name="Mol. Plant">
        <title>The receptor-like cytoplasmic kinase (OsRLCK) gene family in rice: organization, phylogenetic relationship, and expression during development and stress.</title>
        <authorList>
            <person name="Vij S."/>
            <person name="Giri J."/>
            <person name="Dansana P.K."/>
            <person name="Kapoor S."/>
            <person name="Tyagi A.K."/>
        </authorList>
    </citation>
    <scope>GENE FAMILY</scope>
</reference>
<reference key="7">
    <citation type="journal article" date="2015" name="Nat. Biotechnol.">
        <title>A gene cluster encoding lectin receptor kinases confers broad-spectrum and durable insect resistance in rice.</title>
        <authorList>
            <person name="Liu Y."/>
            <person name="Wu H."/>
            <person name="Chen H."/>
            <person name="Liu Y."/>
            <person name="He J."/>
            <person name="Kang H."/>
            <person name="Sun Z."/>
            <person name="Pan G."/>
            <person name="Wang Q."/>
            <person name="Hu J."/>
            <person name="Zhou F."/>
            <person name="Zhou K."/>
            <person name="Zheng X."/>
            <person name="Ren Y."/>
            <person name="Chen L."/>
            <person name="Wang Y."/>
            <person name="Zhao Z."/>
            <person name="Lin Q."/>
            <person name="Wu F."/>
            <person name="Zhang X."/>
            <person name="Guo X."/>
            <person name="Cheng X."/>
            <person name="Jiang L."/>
            <person name="Wu C."/>
            <person name="Wang H."/>
            <person name="Wan J."/>
        </authorList>
    </citation>
    <scope>FUNCTION</scope>
</reference>
<keyword id="KW-0067">ATP-binding</keyword>
<keyword id="KW-1015">Disulfide bond</keyword>
<keyword id="KW-0245">EGF-like domain</keyword>
<keyword id="KW-0325">Glycoprotein</keyword>
<keyword id="KW-0418">Kinase</keyword>
<keyword id="KW-0430">Lectin</keyword>
<keyword id="KW-0472">Membrane</keyword>
<keyword id="KW-0547">Nucleotide-binding</keyword>
<keyword id="KW-0675">Receptor</keyword>
<keyword id="KW-1185">Reference proteome</keyword>
<keyword id="KW-0723">Serine/threonine-protein kinase</keyword>
<keyword id="KW-0732">Signal</keyword>
<keyword id="KW-0808">Transferase</keyword>
<keyword id="KW-0812">Transmembrane</keyword>
<keyword id="KW-1133">Transmembrane helix</keyword>
<proteinExistence type="inferred from homology"/>
<sequence>MAPPLFLLSLQLLVLLSSPSAQAQNISLGTSLTTQGPNNAWLSPSGDFAFGFRPIDGNSSFYLLAIWFNKISDKTATWYAKTSEQEPQPIQVPSGSILQFTSTGVLSLRDPTNREVWNPGATGAPYASMLDTGNFVIAAAGGSTISWETFKNPTDTILVTQALSPGMKLRSRLLTTDYSNGRFLLNMETQRAALYTMAVPSGNLYDPYWSTPIDENVTNQVTNLVFNTTGRIYVSMKNGTQFNMTSGVIRSMEDYYHRATLDPDGVFRQYVYPKKPSSMSQAWTAVSIQPENICNAQTKVGSGTCGFNSYCMFDGSNNQTSCVCPEQYSFFDEVRKYRGCRPDFELQSCDLDEAASMAQYEFNLVNNVDWPQADYEWYTPIDMDECRRLCLIDCFCAVAVFHENTCWKKKLPLSNGIMGSGVQRTVLIKVPKSNSSQPELRKSRKWKSDKKLWILGSSLLLGGSVIANFALSSVLLFGTYCTITRKDVQPLQPSRDPGLPLKAFSYAELEKATDGFKEVLGTGASGIVYKGQLQDELGTYIAVKKIDKIQHETEKEFAVEVQTIGRTYHKNLVRMLGFCNEGTERLLVYEFMVNGSLNRFLFSGVRPLWSLRVQLALGVARGLLYLHEECSTQIIHCDIKPQNILLDDNFIAKISDFGLAKLLRTNQTQTYTGIRGTRGYVAPEWFKNVGITAKVDVYSFGVILLELICCRQNVEMEAAEEEQSILTYWANDCYRCGRVDLLVDGDDEAKLNIKKVERFVAVALWCLQEEPTMRPSILKVTQMLDGADAIPTPPDSSSVVNSFP</sequence>